<protein>
    <recommendedName>
        <fullName evidence="1">Arginine--tRNA ligase</fullName>
        <ecNumber evidence="1">6.1.1.19</ecNumber>
    </recommendedName>
    <alternativeName>
        <fullName evidence="1">Arginyl-tRNA synthetase</fullName>
        <shortName evidence="1">ArgRS</shortName>
    </alternativeName>
</protein>
<name>SYR_PSEPK</name>
<keyword id="KW-0030">Aminoacyl-tRNA synthetase</keyword>
<keyword id="KW-0067">ATP-binding</keyword>
<keyword id="KW-0963">Cytoplasm</keyword>
<keyword id="KW-0436">Ligase</keyword>
<keyword id="KW-0547">Nucleotide-binding</keyword>
<keyword id="KW-0648">Protein biosynthesis</keyword>
<keyword id="KW-1185">Reference proteome</keyword>
<reference key="1">
    <citation type="journal article" date="2002" name="Environ. Microbiol.">
        <title>Complete genome sequence and comparative analysis of the metabolically versatile Pseudomonas putida KT2440.</title>
        <authorList>
            <person name="Nelson K.E."/>
            <person name="Weinel C."/>
            <person name="Paulsen I.T."/>
            <person name="Dodson R.J."/>
            <person name="Hilbert H."/>
            <person name="Martins dos Santos V.A.P."/>
            <person name="Fouts D.E."/>
            <person name="Gill S.R."/>
            <person name="Pop M."/>
            <person name="Holmes M."/>
            <person name="Brinkac L.M."/>
            <person name="Beanan M.J."/>
            <person name="DeBoy R.T."/>
            <person name="Daugherty S.C."/>
            <person name="Kolonay J.F."/>
            <person name="Madupu R."/>
            <person name="Nelson W.C."/>
            <person name="White O."/>
            <person name="Peterson J.D."/>
            <person name="Khouri H.M."/>
            <person name="Hance I."/>
            <person name="Chris Lee P."/>
            <person name="Holtzapple E.K."/>
            <person name="Scanlan D."/>
            <person name="Tran K."/>
            <person name="Moazzez A."/>
            <person name="Utterback T.R."/>
            <person name="Rizzo M."/>
            <person name="Lee K."/>
            <person name="Kosack D."/>
            <person name="Moestl D."/>
            <person name="Wedler H."/>
            <person name="Lauber J."/>
            <person name="Stjepandic D."/>
            <person name="Hoheisel J."/>
            <person name="Straetz M."/>
            <person name="Heim S."/>
            <person name="Kiewitz C."/>
            <person name="Eisen J.A."/>
            <person name="Timmis K.N."/>
            <person name="Duesterhoeft A."/>
            <person name="Tuemmler B."/>
            <person name="Fraser C.M."/>
        </authorList>
    </citation>
    <scope>NUCLEOTIDE SEQUENCE [LARGE SCALE GENOMIC DNA]</scope>
    <source>
        <strain>ATCC 47054 / DSM 6125 / CFBP 8728 / NCIMB 11950 / KT2440</strain>
    </source>
</reference>
<evidence type="ECO:0000255" key="1">
    <source>
        <dbReference type="HAMAP-Rule" id="MF_00123"/>
    </source>
</evidence>
<proteinExistence type="inferred from homology"/>
<sequence length="578" mass="63669">MKDTIRQLIQQALTQLVTDGVLPEGLSPAIQVENARDKTHGDFASNIAMMLAKPAGMKPRDLAEKLINALPASADISKVEIAGPGFLNFFQNTDALANRLDAALADAHLGARKAGPAQKVVIDMSAPNLAKEMHVGHLRSTIIGDSVARVLEFLGDNVIRQNHVGDWGTQFGMLMAYLQENPITSDELSDLENFYRAAKKRFDESEEFATRARGLVVKLQAGDPECLALWTRFKDISLSHCQKTYELLNVKLTMADVMGESAYNDDLANVVADLKAKGLLVEDQGAQCVFLEEFKNSDGDPLPVIVQKADGGYLYATTDLAAVRYRSNVLKADRALYFVDQRQALHFNQVFEVARRAGFVGHPMQMEHMGFGTMNGADGRPFKTRDGGTVKLIDLLTEAKERAYALVKEKNPSLADDELRHIGEVVGIGAVKYADLSKHRTSDYSFNFELMLNFEGNTAPYLLYAYTRVAGVFRKLGKGFDEVDGKIVLQAAHEQDLAARLAQFGEILNNVAEKGTPHVLCSYLYDLAGLFSSFYENCPILAAETPSQQQSRLRLAALTGRTLKQGLELLGLETLERM</sequence>
<feature type="chain" id="PRO_0000151593" description="Arginine--tRNA ligase">
    <location>
        <begin position="1"/>
        <end position="578"/>
    </location>
</feature>
<feature type="short sequence motif" description="'HIGH' region">
    <location>
        <begin position="127"/>
        <end position="137"/>
    </location>
</feature>
<organism>
    <name type="scientific">Pseudomonas putida (strain ATCC 47054 / DSM 6125 / CFBP 8728 / NCIMB 11950 / KT2440)</name>
    <dbReference type="NCBI Taxonomy" id="160488"/>
    <lineage>
        <taxon>Bacteria</taxon>
        <taxon>Pseudomonadati</taxon>
        <taxon>Pseudomonadota</taxon>
        <taxon>Gammaproteobacteria</taxon>
        <taxon>Pseudomonadales</taxon>
        <taxon>Pseudomonadaceae</taxon>
        <taxon>Pseudomonas</taxon>
    </lineage>
</organism>
<accession>Q88CU1</accession>
<comment type="catalytic activity">
    <reaction evidence="1">
        <text>tRNA(Arg) + L-arginine + ATP = L-arginyl-tRNA(Arg) + AMP + diphosphate</text>
        <dbReference type="Rhea" id="RHEA:20301"/>
        <dbReference type="Rhea" id="RHEA-COMP:9658"/>
        <dbReference type="Rhea" id="RHEA-COMP:9673"/>
        <dbReference type="ChEBI" id="CHEBI:30616"/>
        <dbReference type="ChEBI" id="CHEBI:32682"/>
        <dbReference type="ChEBI" id="CHEBI:33019"/>
        <dbReference type="ChEBI" id="CHEBI:78442"/>
        <dbReference type="ChEBI" id="CHEBI:78513"/>
        <dbReference type="ChEBI" id="CHEBI:456215"/>
        <dbReference type="EC" id="6.1.1.19"/>
    </reaction>
</comment>
<comment type="subunit">
    <text evidence="1">Monomer.</text>
</comment>
<comment type="subcellular location">
    <subcellularLocation>
        <location evidence="1">Cytoplasm</location>
    </subcellularLocation>
</comment>
<comment type="similarity">
    <text evidence="1">Belongs to the class-I aminoacyl-tRNA synthetase family.</text>
</comment>
<gene>
    <name evidence="1" type="primary">argS</name>
    <name type="ordered locus">PP_5089</name>
</gene>
<dbReference type="EC" id="6.1.1.19" evidence="1"/>
<dbReference type="EMBL" id="AE015451">
    <property type="protein sequence ID" value="AAN70654.1"/>
    <property type="molecule type" value="Genomic_DNA"/>
</dbReference>
<dbReference type="RefSeq" id="NP_747190.1">
    <property type="nucleotide sequence ID" value="NC_002947.4"/>
</dbReference>
<dbReference type="RefSeq" id="WP_010955633.1">
    <property type="nucleotide sequence ID" value="NZ_CP169744.1"/>
</dbReference>
<dbReference type="SMR" id="Q88CU1"/>
<dbReference type="STRING" id="160488.PP_5089"/>
<dbReference type="PaxDb" id="160488-PP_5089"/>
<dbReference type="GeneID" id="83682824"/>
<dbReference type="KEGG" id="ppu:PP_5089"/>
<dbReference type="PATRIC" id="fig|160488.4.peg.5432"/>
<dbReference type="eggNOG" id="COG0018">
    <property type="taxonomic scope" value="Bacteria"/>
</dbReference>
<dbReference type="HOGENOM" id="CLU_006406_5_1_6"/>
<dbReference type="OrthoDB" id="9803211at2"/>
<dbReference type="PhylomeDB" id="Q88CU1"/>
<dbReference type="BioCyc" id="PPUT160488:G1G01-5433-MONOMER"/>
<dbReference type="Proteomes" id="UP000000556">
    <property type="component" value="Chromosome"/>
</dbReference>
<dbReference type="GO" id="GO:0005737">
    <property type="term" value="C:cytoplasm"/>
    <property type="evidence" value="ECO:0007669"/>
    <property type="project" value="UniProtKB-SubCell"/>
</dbReference>
<dbReference type="GO" id="GO:0004814">
    <property type="term" value="F:arginine-tRNA ligase activity"/>
    <property type="evidence" value="ECO:0007669"/>
    <property type="project" value="UniProtKB-UniRule"/>
</dbReference>
<dbReference type="GO" id="GO:0005524">
    <property type="term" value="F:ATP binding"/>
    <property type="evidence" value="ECO:0007669"/>
    <property type="project" value="UniProtKB-UniRule"/>
</dbReference>
<dbReference type="GO" id="GO:0006420">
    <property type="term" value="P:arginyl-tRNA aminoacylation"/>
    <property type="evidence" value="ECO:0007669"/>
    <property type="project" value="UniProtKB-UniRule"/>
</dbReference>
<dbReference type="CDD" id="cd00671">
    <property type="entry name" value="ArgRS_core"/>
    <property type="match status" value="1"/>
</dbReference>
<dbReference type="FunFam" id="3.30.1360.70:FF:000003">
    <property type="entry name" value="Arginine--tRNA ligase"/>
    <property type="match status" value="1"/>
</dbReference>
<dbReference type="FunFam" id="3.40.50.620:FF:000030">
    <property type="entry name" value="Arginine--tRNA ligase"/>
    <property type="match status" value="1"/>
</dbReference>
<dbReference type="FunFam" id="1.10.730.10:FF:000006">
    <property type="entry name" value="Arginyl-tRNA synthetase 2, mitochondrial"/>
    <property type="match status" value="1"/>
</dbReference>
<dbReference type="Gene3D" id="3.30.1360.70">
    <property type="entry name" value="Arginyl tRNA synthetase N-terminal domain"/>
    <property type="match status" value="1"/>
</dbReference>
<dbReference type="Gene3D" id="3.40.50.620">
    <property type="entry name" value="HUPs"/>
    <property type="match status" value="1"/>
</dbReference>
<dbReference type="Gene3D" id="1.10.730.10">
    <property type="entry name" value="Isoleucyl-tRNA Synthetase, Domain 1"/>
    <property type="match status" value="1"/>
</dbReference>
<dbReference type="HAMAP" id="MF_00123">
    <property type="entry name" value="Arg_tRNA_synth"/>
    <property type="match status" value="1"/>
</dbReference>
<dbReference type="InterPro" id="IPR001412">
    <property type="entry name" value="aa-tRNA-synth_I_CS"/>
</dbReference>
<dbReference type="InterPro" id="IPR001278">
    <property type="entry name" value="Arg-tRNA-ligase"/>
</dbReference>
<dbReference type="InterPro" id="IPR005148">
    <property type="entry name" value="Arg-tRNA-synth_N"/>
</dbReference>
<dbReference type="InterPro" id="IPR036695">
    <property type="entry name" value="Arg-tRNA-synth_N_sf"/>
</dbReference>
<dbReference type="InterPro" id="IPR035684">
    <property type="entry name" value="ArgRS_core"/>
</dbReference>
<dbReference type="InterPro" id="IPR008909">
    <property type="entry name" value="DALR_anticod-bd"/>
</dbReference>
<dbReference type="InterPro" id="IPR014729">
    <property type="entry name" value="Rossmann-like_a/b/a_fold"/>
</dbReference>
<dbReference type="InterPro" id="IPR009080">
    <property type="entry name" value="tRNAsynth_Ia_anticodon-bd"/>
</dbReference>
<dbReference type="NCBIfam" id="TIGR00456">
    <property type="entry name" value="argS"/>
    <property type="match status" value="1"/>
</dbReference>
<dbReference type="PANTHER" id="PTHR11956:SF5">
    <property type="entry name" value="ARGININE--TRNA LIGASE, CYTOPLASMIC"/>
    <property type="match status" value="1"/>
</dbReference>
<dbReference type="PANTHER" id="PTHR11956">
    <property type="entry name" value="ARGINYL-TRNA SYNTHETASE"/>
    <property type="match status" value="1"/>
</dbReference>
<dbReference type="Pfam" id="PF03485">
    <property type="entry name" value="Arg_tRNA_synt_N"/>
    <property type="match status" value="1"/>
</dbReference>
<dbReference type="Pfam" id="PF05746">
    <property type="entry name" value="DALR_1"/>
    <property type="match status" value="1"/>
</dbReference>
<dbReference type="Pfam" id="PF00750">
    <property type="entry name" value="tRNA-synt_1d"/>
    <property type="match status" value="1"/>
</dbReference>
<dbReference type="PRINTS" id="PR01038">
    <property type="entry name" value="TRNASYNTHARG"/>
</dbReference>
<dbReference type="SMART" id="SM01016">
    <property type="entry name" value="Arg_tRNA_synt_N"/>
    <property type="match status" value="1"/>
</dbReference>
<dbReference type="SMART" id="SM00836">
    <property type="entry name" value="DALR_1"/>
    <property type="match status" value="1"/>
</dbReference>
<dbReference type="SUPFAM" id="SSF47323">
    <property type="entry name" value="Anticodon-binding domain of a subclass of class I aminoacyl-tRNA synthetases"/>
    <property type="match status" value="1"/>
</dbReference>
<dbReference type="SUPFAM" id="SSF55190">
    <property type="entry name" value="Arginyl-tRNA synthetase (ArgRS), N-terminal 'additional' domain"/>
    <property type="match status" value="1"/>
</dbReference>
<dbReference type="SUPFAM" id="SSF52374">
    <property type="entry name" value="Nucleotidylyl transferase"/>
    <property type="match status" value="1"/>
</dbReference>
<dbReference type="PROSITE" id="PS00178">
    <property type="entry name" value="AA_TRNA_LIGASE_I"/>
    <property type="match status" value="1"/>
</dbReference>